<organism>
    <name type="scientific">Roseobacter denitrificans (strain ATCC 33942 / OCh 114)</name>
    <name type="common">Erythrobacter sp. (strain OCh 114)</name>
    <name type="synonym">Roseobacter denitrificans</name>
    <dbReference type="NCBI Taxonomy" id="375451"/>
    <lineage>
        <taxon>Bacteria</taxon>
        <taxon>Pseudomonadati</taxon>
        <taxon>Pseudomonadota</taxon>
        <taxon>Alphaproteobacteria</taxon>
        <taxon>Rhodobacterales</taxon>
        <taxon>Roseobacteraceae</taxon>
        <taxon>Roseobacter</taxon>
    </lineage>
</organism>
<name>SURE_ROSDO</name>
<gene>
    <name evidence="1" type="primary">surE</name>
    <name type="ordered locus">RD1_3249</name>
</gene>
<comment type="function">
    <text evidence="1">Nucleotidase that shows phosphatase activity on nucleoside 5'-monophosphates.</text>
</comment>
<comment type="catalytic activity">
    <reaction evidence="1">
        <text>a ribonucleoside 5'-phosphate + H2O = a ribonucleoside + phosphate</text>
        <dbReference type="Rhea" id="RHEA:12484"/>
        <dbReference type="ChEBI" id="CHEBI:15377"/>
        <dbReference type="ChEBI" id="CHEBI:18254"/>
        <dbReference type="ChEBI" id="CHEBI:43474"/>
        <dbReference type="ChEBI" id="CHEBI:58043"/>
        <dbReference type="EC" id="3.1.3.5"/>
    </reaction>
</comment>
<comment type="cofactor">
    <cofactor evidence="1">
        <name>a divalent metal cation</name>
        <dbReference type="ChEBI" id="CHEBI:60240"/>
    </cofactor>
    <text evidence="1">Binds 1 divalent metal cation per subunit.</text>
</comment>
<comment type="subcellular location">
    <subcellularLocation>
        <location evidence="1">Cytoplasm</location>
    </subcellularLocation>
</comment>
<comment type="similarity">
    <text evidence="1">Belongs to the SurE nucleotidase family.</text>
</comment>
<dbReference type="EC" id="3.1.3.5" evidence="1"/>
<dbReference type="EMBL" id="CP000362">
    <property type="protein sequence ID" value="ABG32750.1"/>
    <property type="molecule type" value="Genomic_DNA"/>
</dbReference>
<dbReference type="RefSeq" id="WP_011569366.1">
    <property type="nucleotide sequence ID" value="NC_008209.1"/>
</dbReference>
<dbReference type="SMR" id="Q163U3"/>
<dbReference type="STRING" id="375451.RD1_3249"/>
<dbReference type="KEGG" id="rde:RD1_3249"/>
<dbReference type="eggNOG" id="COG0496">
    <property type="taxonomic scope" value="Bacteria"/>
</dbReference>
<dbReference type="HOGENOM" id="CLU_045192_1_2_5"/>
<dbReference type="OrthoDB" id="9780815at2"/>
<dbReference type="Proteomes" id="UP000007029">
    <property type="component" value="Chromosome"/>
</dbReference>
<dbReference type="GO" id="GO:0005737">
    <property type="term" value="C:cytoplasm"/>
    <property type="evidence" value="ECO:0007669"/>
    <property type="project" value="UniProtKB-SubCell"/>
</dbReference>
<dbReference type="GO" id="GO:0008254">
    <property type="term" value="F:3'-nucleotidase activity"/>
    <property type="evidence" value="ECO:0007669"/>
    <property type="project" value="TreeGrafter"/>
</dbReference>
<dbReference type="GO" id="GO:0008253">
    <property type="term" value="F:5'-nucleotidase activity"/>
    <property type="evidence" value="ECO:0007669"/>
    <property type="project" value="UniProtKB-UniRule"/>
</dbReference>
<dbReference type="GO" id="GO:0004309">
    <property type="term" value="F:exopolyphosphatase activity"/>
    <property type="evidence" value="ECO:0007669"/>
    <property type="project" value="TreeGrafter"/>
</dbReference>
<dbReference type="GO" id="GO:0046872">
    <property type="term" value="F:metal ion binding"/>
    <property type="evidence" value="ECO:0007669"/>
    <property type="project" value="UniProtKB-UniRule"/>
</dbReference>
<dbReference type="GO" id="GO:0000166">
    <property type="term" value="F:nucleotide binding"/>
    <property type="evidence" value="ECO:0007669"/>
    <property type="project" value="UniProtKB-KW"/>
</dbReference>
<dbReference type="Gene3D" id="3.40.1210.10">
    <property type="entry name" value="Survival protein SurE-like phosphatase/nucleotidase"/>
    <property type="match status" value="1"/>
</dbReference>
<dbReference type="HAMAP" id="MF_00060">
    <property type="entry name" value="SurE"/>
    <property type="match status" value="1"/>
</dbReference>
<dbReference type="InterPro" id="IPR030048">
    <property type="entry name" value="SurE"/>
</dbReference>
<dbReference type="InterPro" id="IPR002828">
    <property type="entry name" value="SurE-like_Pase/nucleotidase"/>
</dbReference>
<dbReference type="InterPro" id="IPR036523">
    <property type="entry name" value="SurE-like_sf"/>
</dbReference>
<dbReference type="NCBIfam" id="NF001490">
    <property type="entry name" value="PRK00346.1-4"/>
    <property type="match status" value="1"/>
</dbReference>
<dbReference type="NCBIfam" id="NF010541">
    <property type="entry name" value="PRK13931.1"/>
    <property type="match status" value="1"/>
</dbReference>
<dbReference type="NCBIfam" id="TIGR00087">
    <property type="entry name" value="surE"/>
    <property type="match status" value="1"/>
</dbReference>
<dbReference type="PANTHER" id="PTHR30457">
    <property type="entry name" value="5'-NUCLEOTIDASE SURE"/>
    <property type="match status" value="1"/>
</dbReference>
<dbReference type="PANTHER" id="PTHR30457:SF12">
    <property type="entry name" value="5'_3'-NUCLEOTIDASE SURE"/>
    <property type="match status" value="1"/>
</dbReference>
<dbReference type="Pfam" id="PF01975">
    <property type="entry name" value="SurE"/>
    <property type="match status" value="1"/>
</dbReference>
<dbReference type="SUPFAM" id="SSF64167">
    <property type="entry name" value="SurE-like"/>
    <property type="match status" value="1"/>
</dbReference>
<keyword id="KW-0963">Cytoplasm</keyword>
<keyword id="KW-0378">Hydrolase</keyword>
<keyword id="KW-0479">Metal-binding</keyword>
<keyword id="KW-0547">Nucleotide-binding</keyword>
<keyword id="KW-1185">Reference proteome</keyword>
<proteinExistence type="inferred from homology"/>
<evidence type="ECO:0000255" key="1">
    <source>
        <dbReference type="HAMAP-Rule" id="MF_00060"/>
    </source>
</evidence>
<reference key="1">
    <citation type="journal article" date="2007" name="J. Bacteriol.">
        <title>The complete genome sequence of Roseobacter denitrificans reveals a mixotrophic rather than photosynthetic metabolism.</title>
        <authorList>
            <person name="Swingley W.D."/>
            <person name="Sadekar S."/>
            <person name="Mastrian S.D."/>
            <person name="Matthies H.J."/>
            <person name="Hao J."/>
            <person name="Ramos H."/>
            <person name="Acharya C.R."/>
            <person name="Conrad A.L."/>
            <person name="Taylor H.L."/>
            <person name="Dejesa L.C."/>
            <person name="Shah M.K."/>
            <person name="O'Huallachain M.E."/>
            <person name="Lince M.T."/>
            <person name="Blankenship R.E."/>
            <person name="Beatty J.T."/>
            <person name="Touchman J.W."/>
        </authorList>
    </citation>
    <scope>NUCLEOTIDE SEQUENCE [LARGE SCALE GENOMIC DNA]</scope>
    <source>
        <strain>ATCC 33942 / OCh 114</strain>
    </source>
</reference>
<accession>Q163U3</accession>
<feature type="chain" id="PRO_1000007786" description="5'-nucleotidase SurE">
    <location>
        <begin position="1"/>
        <end position="261"/>
    </location>
</feature>
<feature type="binding site" evidence="1">
    <location>
        <position position="8"/>
    </location>
    <ligand>
        <name>a divalent metal cation</name>
        <dbReference type="ChEBI" id="CHEBI:60240"/>
    </ligand>
</feature>
<feature type="binding site" evidence="1">
    <location>
        <position position="9"/>
    </location>
    <ligand>
        <name>a divalent metal cation</name>
        <dbReference type="ChEBI" id="CHEBI:60240"/>
    </ligand>
</feature>
<feature type="binding site" evidence="1">
    <location>
        <position position="43"/>
    </location>
    <ligand>
        <name>a divalent metal cation</name>
        <dbReference type="ChEBI" id="CHEBI:60240"/>
    </ligand>
</feature>
<feature type="binding site" evidence="1">
    <location>
        <position position="96"/>
    </location>
    <ligand>
        <name>a divalent metal cation</name>
        <dbReference type="ChEBI" id="CHEBI:60240"/>
    </ligand>
</feature>
<sequence length="261" mass="27844">MRILITNDDGINAPGLMVLHEIATRLAGQDGEVWTVAPAFEQSGVGHCISYTRPMMVAQMGPRRFAAEGSPADCVLAGLHDVMKDSPPDLVLSGVNRGNNSAENTLYSGTIGGAMEAALQGLPAIALSQYYGPRNNAIENPFEASAQHGVDVVQRILAHTPQETGGYRLFYNVNFPPVPGDEVLGIRLATQGFREGLGFSTEPHNAPSGRRFLWIKGGDQHRPTAPGSDAQLNLEGYISVTPMRADLTAHDMMAPLAGINT</sequence>
<protein>
    <recommendedName>
        <fullName evidence="1">5'-nucleotidase SurE</fullName>
        <ecNumber evidence="1">3.1.3.5</ecNumber>
    </recommendedName>
    <alternativeName>
        <fullName evidence="1">Nucleoside 5'-monophosphate phosphohydrolase</fullName>
    </alternativeName>
</protein>